<feature type="signal peptide" evidence="2">
    <location>
        <begin position="1"/>
        <end position="58"/>
    </location>
</feature>
<feature type="chain" id="PRO_0000322582" description="Scavenger receptor cysteine-rich domain-containing group B protein" evidence="2">
    <location>
        <begin position="59"/>
        <end position="586"/>
    </location>
</feature>
<feature type="domain" description="SRCR 1" evidence="3">
    <location>
        <begin position="69"/>
        <end position="169"/>
    </location>
</feature>
<feature type="domain" description="SRCR 2" evidence="3">
    <location>
        <begin position="200"/>
        <end position="300"/>
    </location>
</feature>
<feature type="domain" description="SRCR 3" evidence="3">
    <location>
        <begin position="355"/>
        <end position="455"/>
    </location>
</feature>
<feature type="domain" description="SRCR 4" evidence="3">
    <location>
        <begin position="484"/>
        <end position="584"/>
    </location>
</feature>
<feature type="region of interest" description="Disordered" evidence="4">
    <location>
        <begin position="1"/>
        <end position="33"/>
    </location>
</feature>
<feature type="disulfide bond" evidence="3">
    <location>
        <begin position="94"/>
        <end position="158"/>
    </location>
</feature>
<feature type="disulfide bond" evidence="3">
    <location>
        <begin position="107"/>
        <end position="168"/>
    </location>
</feature>
<feature type="disulfide bond" evidence="3">
    <location>
        <begin position="138"/>
        <end position="148"/>
    </location>
</feature>
<feature type="disulfide bond" evidence="3">
    <location>
        <begin position="225"/>
        <end position="289"/>
    </location>
</feature>
<feature type="disulfide bond" evidence="3">
    <location>
        <begin position="238"/>
        <end position="299"/>
    </location>
</feature>
<feature type="disulfide bond" evidence="3">
    <location>
        <begin position="269"/>
        <end position="279"/>
    </location>
</feature>
<feature type="disulfide bond" evidence="3">
    <location>
        <begin position="380"/>
        <end position="444"/>
    </location>
</feature>
<feature type="disulfide bond" evidence="3">
    <location>
        <begin position="393"/>
        <end position="454"/>
    </location>
</feature>
<feature type="disulfide bond" evidence="3">
    <location>
        <begin position="424"/>
        <end position="434"/>
    </location>
</feature>
<feature type="disulfide bond" evidence="3">
    <location>
        <begin position="509"/>
        <end position="573"/>
    </location>
</feature>
<feature type="disulfide bond" evidence="3">
    <location>
        <begin position="522"/>
        <end position="583"/>
    </location>
</feature>
<feature type="disulfide bond" evidence="3">
    <location>
        <begin position="553"/>
        <end position="563"/>
    </location>
</feature>
<name>SRB4D_MOUSE</name>
<gene>
    <name evidence="8" type="primary">Ssc4d</name>
    <name evidence="7" type="synonym">Srcrb4d</name>
</gene>
<keyword id="KW-1015">Disulfide bond</keyword>
<keyword id="KW-1185">Reference proteome</keyword>
<keyword id="KW-0677">Repeat</keyword>
<keyword id="KW-0964">Secreted</keyword>
<keyword id="KW-0732">Signal</keyword>
<comment type="subcellular location">
    <subcellularLocation>
        <location evidence="5">Secreted</location>
    </subcellularLocation>
</comment>
<dbReference type="EMBL" id="AC087420">
    <property type="status" value="NOT_ANNOTATED_CDS"/>
    <property type="molecule type" value="Genomic_DNA"/>
</dbReference>
<dbReference type="EMBL" id="BC117747">
    <property type="protein sequence ID" value="AAI17748.1"/>
    <property type="molecule type" value="mRNA"/>
</dbReference>
<dbReference type="EMBL" id="BC126947">
    <property type="protein sequence ID" value="AAI26948.1"/>
    <property type="molecule type" value="mRNA"/>
</dbReference>
<dbReference type="CCDS" id="CCDS51664.1"/>
<dbReference type="RefSeq" id="NP_001153838.1">
    <property type="nucleotide sequence ID" value="NM_001160366.2"/>
</dbReference>
<dbReference type="RefSeq" id="NP_001418645.1">
    <property type="nucleotide sequence ID" value="NM_001431716.1"/>
</dbReference>
<dbReference type="RefSeq" id="XP_006504400.1">
    <property type="nucleotide sequence ID" value="XM_006504337.1"/>
</dbReference>
<dbReference type="SMR" id="A1L0T3"/>
<dbReference type="FunCoup" id="A1L0T3">
    <property type="interactions" value="59"/>
</dbReference>
<dbReference type="STRING" id="10090.ENSMUSP00000106782"/>
<dbReference type="PaxDb" id="10090-ENSMUSP00000106782"/>
<dbReference type="PeptideAtlas" id="A1L0T3"/>
<dbReference type="Antibodypedia" id="14947">
    <property type="antibodies" value="99 antibodies from 21 providers"/>
</dbReference>
<dbReference type="DNASU" id="109267"/>
<dbReference type="Ensembl" id="ENSMUST00000111152.8">
    <property type="protein sequence ID" value="ENSMUSP00000106782.2"/>
    <property type="gene ID" value="ENSMUSG00000029699.14"/>
</dbReference>
<dbReference type="Ensembl" id="ENSMUST00000111153.8">
    <property type="protein sequence ID" value="ENSMUSP00000106783.2"/>
    <property type="gene ID" value="ENSMUSG00000029699.14"/>
</dbReference>
<dbReference type="GeneID" id="109267"/>
<dbReference type="KEGG" id="mmu:109267"/>
<dbReference type="UCSC" id="uc008zzj.2">
    <property type="organism name" value="mouse"/>
</dbReference>
<dbReference type="AGR" id="MGI:1924709"/>
<dbReference type="CTD" id="136853"/>
<dbReference type="MGI" id="MGI:1924709">
    <property type="gene designation" value="Ssc4d"/>
</dbReference>
<dbReference type="VEuPathDB" id="HostDB:ENSMUSG00000029699"/>
<dbReference type="eggNOG" id="ENOG502QU9F">
    <property type="taxonomic scope" value="Eukaryota"/>
</dbReference>
<dbReference type="GeneTree" id="ENSGT00940000160521"/>
<dbReference type="HOGENOM" id="CLU_002555_11_2_1"/>
<dbReference type="InParanoid" id="A1L0T3"/>
<dbReference type="OMA" id="ADCFNLG"/>
<dbReference type="OrthoDB" id="536948at2759"/>
<dbReference type="PhylomeDB" id="A1L0T3"/>
<dbReference type="TreeFam" id="TF329295"/>
<dbReference type="BioGRID-ORCS" id="109267">
    <property type="hits" value="2 hits in 76 CRISPR screens"/>
</dbReference>
<dbReference type="PRO" id="PR:A1L0T3"/>
<dbReference type="Proteomes" id="UP000000589">
    <property type="component" value="Chromosome 5"/>
</dbReference>
<dbReference type="RNAct" id="A1L0T3">
    <property type="molecule type" value="protein"/>
</dbReference>
<dbReference type="Bgee" id="ENSMUSG00000029699">
    <property type="expression patterns" value="Expressed in vestibular epithelium and 115 other cell types or tissues"/>
</dbReference>
<dbReference type="ExpressionAtlas" id="A1L0T3">
    <property type="expression patterns" value="baseline and differential"/>
</dbReference>
<dbReference type="GO" id="GO:0005576">
    <property type="term" value="C:extracellular region"/>
    <property type="evidence" value="ECO:0007669"/>
    <property type="project" value="UniProtKB-SubCell"/>
</dbReference>
<dbReference type="GO" id="GO:0016020">
    <property type="term" value="C:membrane"/>
    <property type="evidence" value="ECO:0007669"/>
    <property type="project" value="InterPro"/>
</dbReference>
<dbReference type="FunFam" id="3.10.250.10:FF:000001">
    <property type="entry name" value="Lysyl oxidase 4 isoform X1"/>
    <property type="match status" value="4"/>
</dbReference>
<dbReference type="Gene3D" id="3.10.250.10">
    <property type="entry name" value="SRCR-like domain"/>
    <property type="match status" value="4"/>
</dbReference>
<dbReference type="InterPro" id="IPR001190">
    <property type="entry name" value="SRCR"/>
</dbReference>
<dbReference type="InterPro" id="IPR036772">
    <property type="entry name" value="SRCR-like_dom_sf"/>
</dbReference>
<dbReference type="PANTHER" id="PTHR48071:SF27">
    <property type="entry name" value="SCAVENGER RECEPTOR CYSTEINE-RICH TYPE 1 PROTEIN M130-LIKE"/>
    <property type="match status" value="1"/>
</dbReference>
<dbReference type="PANTHER" id="PTHR48071">
    <property type="entry name" value="SRCR DOMAIN-CONTAINING PROTEIN"/>
    <property type="match status" value="1"/>
</dbReference>
<dbReference type="Pfam" id="PF00530">
    <property type="entry name" value="SRCR"/>
    <property type="match status" value="4"/>
</dbReference>
<dbReference type="PRINTS" id="PR00258">
    <property type="entry name" value="SPERACTRCPTR"/>
</dbReference>
<dbReference type="SMART" id="SM00202">
    <property type="entry name" value="SR"/>
    <property type="match status" value="4"/>
</dbReference>
<dbReference type="SUPFAM" id="SSF56487">
    <property type="entry name" value="SRCR-like"/>
    <property type="match status" value="4"/>
</dbReference>
<dbReference type="PROSITE" id="PS00420">
    <property type="entry name" value="SRCR_1"/>
    <property type="match status" value="4"/>
</dbReference>
<dbReference type="PROSITE" id="PS50287">
    <property type="entry name" value="SRCR_2"/>
    <property type="match status" value="4"/>
</dbReference>
<accession>A1L0T3</accession>
<reference key="1">
    <citation type="journal article" date="2009" name="PLoS Biol.">
        <title>Lineage-specific biology revealed by a finished genome assembly of the mouse.</title>
        <authorList>
            <person name="Church D.M."/>
            <person name="Goodstadt L."/>
            <person name="Hillier L.W."/>
            <person name="Zody M.C."/>
            <person name="Goldstein S."/>
            <person name="She X."/>
            <person name="Bult C.J."/>
            <person name="Agarwala R."/>
            <person name="Cherry J.L."/>
            <person name="DiCuccio M."/>
            <person name="Hlavina W."/>
            <person name="Kapustin Y."/>
            <person name="Meric P."/>
            <person name="Maglott D."/>
            <person name="Birtle Z."/>
            <person name="Marques A.C."/>
            <person name="Graves T."/>
            <person name="Zhou S."/>
            <person name="Teague B."/>
            <person name="Potamousis K."/>
            <person name="Churas C."/>
            <person name="Place M."/>
            <person name="Herschleb J."/>
            <person name="Runnheim R."/>
            <person name="Forrest D."/>
            <person name="Amos-Landgraf J."/>
            <person name="Schwartz D.C."/>
            <person name="Cheng Z."/>
            <person name="Lindblad-Toh K."/>
            <person name="Eichler E.E."/>
            <person name="Ponting C.P."/>
        </authorList>
    </citation>
    <scope>NUCLEOTIDE SEQUENCE [LARGE SCALE GENOMIC DNA]</scope>
    <source>
        <strain>C57BL/6J</strain>
    </source>
</reference>
<reference evidence="5 6" key="2">
    <citation type="journal article" date="2004" name="Genome Res.">
        <title>The status, quality, and expansion of the NIH full-length cDNA project: the Mammalian Gene Collection (MGC).</title>
        <authorList>
            <consortium name="The MGC Project Team"/>
        </authorList>
    </citation>
    <scope>NUCLEOTIDE SEQUENCE [LARGE SCALE MRNA] OF 68-586</scope>
</reference>
<evidence type="ECO:0000250" key="1">
    <source>
        <dbReference type="UniProtKB" id="Q8WTU2"/>
    </source>
</evidence>
<evidence type="ECO:0000255" key="2"/>
<evidence type="ECO:0000255" key="3">
    <source>
        <dbReference type="PROSITE-ProRule" id="PRU00196"/>
    </source>
</evidence>
<evidence type="ECO:0000256" key="4">
    <source>
        <dbReference type="SAM" id="MobiDB-lite"/>
    </source>
</evidence>
<evidence type="ECO:0000305" key="5"/>
<evidence type="ECO:0000312" key="6">
    <source>
        <dbReference type="EMBL" id="AAI17748.1"/>
    </source>
</evidence>
<evidence type="ECO:0000312" key="7">
    <source>
        <dbReference type="EMBL" id="AAI26948.1"/>
    </source>
</evidence>
<evidence type="ECO:0000312" key="8">
    <source>
        <dbReference type="MGI" id="MGI:1924709"/>
    </source>
</evidence>
<organism>
    <name type="scientific">Mus musculus</name>
    <name type="common">Mouse</name>
    <dbReference type="NCBI Taxonomy" id="10090"/>
    <lineage>
        <taxon>Eukaryota</taxon>
        <taxon>Metazoa</taxon>
        <taxon>Chordata</taxon>
        <taxon>Craniata</taxon>
        <taxon>Vertebrata</taxon>
        <taxon>Euteleostomi</taxon>
        <taxon>Mammalia</taxon>
        <taxon>Eutheria</taxon>
        <taxon>Euarchontoglires</taxon>
        <taxon>Glires</taxon>
        <taxon>Rodentia</taxon>
        <taxon>Myomorpha</taxon>
        <taxon>Muroidea</taxon>
        <taxon>Muridae</taxon>
        <taxon>Murinae</taxon>
        <taxon>Mus</taxon>
        <taxon>Mus</taxon>
    </lineage>
</organism>
<sequence>MGPSERPSIGWTPKEAEMQIGPQPDGWSRGWKPGDRGAVPLPLSPALSFLLLFPLASALQPTPLPFPELRLVGGPSRCRGRLEVMHSGSWGSVCDDDWDVVDANVVCRQLGCGLALPVPRPLAFGQGRGPIFLDNVECRGQEASLSECGSRGWGVHNCFHYEDVAVLCDEFLHTQPPTRKVLTSMAPATALQNGKGEGSVRLVGGASPCQGRVEILHGGVWGTVCDDDWGLQDAAVVCRQLGCGVALAATTNAFFGYGTGHILLDNVHCEGGEPRLAACQSLGWGVHNCGHHEDAGVLCAVLSPPTSTALPPSVTKEDWARHTGPAATGVGASPSRDTVWLTTAARASGKKSGRLRLVGGPSPCRGRVEVLYAGGWGTVCDDDWDFADARVACREAGCGPALGATGLGHFGYGRGPVLLDNVGCTGTEARLSDCFHLGWGQHNCGHHEDAGALCAGPEELGLQVQQAGSETTRMPSPRPRDGHLRLASGTHRCEGRVELFLGQRWGTVCDDAWDLRAAIVLCRQLGCGQALAAPGEAHFGPGRGPILLDNVKCRGDESTLLLCSHIRWDVHNCDHSEDASVLCQPL</sequence>
<protein>
    <recommendedName>
        <fullName evidence="1">Scavenger receptor cysteine-rich domain-containing group B protein</fullName>
    </recommendedName>
    <alternativeName>
        <fullName evidence="1">Four scavenger receptor cysteine-rich domains-containing protein</fullName>
    </alternativeName>
    <alternativeName>
        <fullName evidence="1">S4D-SRCRB</fullName>
    </alternativeName>
</protein>
<proteinExistence type="evidence at transcript level"/>